<feature type="chain" id="PRO_1000141203" description="Small ribosomal subunit protein uS13">
    <location>
        <begin position="1"/>
        <end position="118"/>
    </location>
</feature>
<feature type="region of interest" description="Disordered" evidence="2">
    <location>
        <begin position="92"/>
        <end position="118"/>
    </location>
</feature>
<sequence length="118" mass="13267">MARIAGVNIPDNKHAVISLTYIFGIGRHTAKNILAAVGITETTKIRELDDAQLDAIRAEVAKVPTEGDLRREISMNIKRLMDLGCYRGLRHRRSLPVRGQRTKTNARTRKGPRKPIKK</sequence>
<dbReference type="EMBL" id="CP001172">
    <property type="protein sequence ID" value="ACJ58831.1"/>
    <property type="molecule type" value="Genomic_DNA"/>
</dbReference>
<dbReference type="RefSeq" id="WP_000090815.1">
    <property type="nucleotide sequence ID" value="NZ_CP001172.1"/>
</dbReference>
<dbReference type="SMR" id="B7GW24"/>
<dbReference type="GeneID" id="92895295"/>
<dbReference type="HOGENOM" id="CLU_103849_1_2_6"/>
<dbReference type="Proteomes" id="UP000006924">
    <property type="component" value="Chromosome"/>
</dbReference>
<dbReference type="GO" id="GO:0005829">
    <property type="term" value="C:cytosol"/>
    <property type="evidence" value="ECO:0007669"/>
    <property type="project" value="TreeGrafter"/>
</dbReference>
<dbReference type="GO" id="GO:0015935">
    <property type="term" value="C:small ribosomal subunit"/>
    <property type="evidence" value="ECO:0007669"/>
    <property type="project" value="TreeGrafter"/>
</dbReference>
<dbReference type="GO" id="GO:0019843">
    <property type="term" value="F:rRNA binding"/>
    <property type="evidence" value="ECO:0007669"/>
    <property type="project" value="UniProtKB-UniRule"/>
</dbReference>
<dbReference type="GO" id="GO:0003735">
    <property type="term" value="F:structural constituent of ribosome"/>
    <property type="evidence" value="ECO:0007669"/>
    <property type="project" value="InterPro"/>
</dbReference>
<dbReference type="GO" id="GO:0000049">
    <property type="term" value="F:tRNA binding"/>
    <property type="evidence" value="ECO:0007669"/>
    <property type="project" value="UniProtKB-UniRule"/>
</dbReference>
<dbReference type="GO" id="GO:0006412">
    <property type="term" value="P:translation"/>
    <property type="evidence" value="ECO:0007669"/>
    <property type="project" value="UniProtKB-UniRule"/>
</dbReference>
<dbReference type="FunFam" id="1.10.8.50:FF:000001">
    <property type="entry name" value="30S ribosomal protein S13"/>
    <property type="match status" value="1"/>
</dbReference>
<dbReference type="FunFam" id="4.10.910.10:FF:000001">
    <property type="entry name" value="30S ribosomal protein S13"/>
    <property type="match status" value="1"/>
</dbReference>
<dbReference type="Gene3D" id="1.10.8.50">
    <property type="match status" value="1"/>
</dbReference>
<dbReference type="Gene3D" id="4.10.910.10">
    <property type="entry name" value="30s ribosomal protein s13, domain 2"/>
    <property type="match status" value="1"/>
</dbReference>
<dbReference type="HAMAP" id="MF_01315">
    <property type="entry name" value="Ribosomal_uS13"/>
    <property type="match status" value="1"/>
</dbReference>
<dbReference type="InterPro" id="IPR027437">
    <property type="entry name" value="Rbsml_uS13_C"/>
</dbReference>
<dbReference type="InterPro" id="IPR001892">
    <property type="entry name" value="Ribosomal_uS13"/>
</dbReference>
<dbReference type="InterPro" id="IPR010979">
    <property type="entry name" value="Ribosomal_uS13-like_H2TH"/>
</dbReference>
<dbReference type="InterPro" id="IPR019980">
    <property type="entry name" value="Ribosomal_uS13_bac-type"/>
</dbReference>
<dbReference type="InterPro" id="IPR018269">
    <property type="entry name" value="Ribosomal_uS13_CS"/>
</dbReference>
<dbReference type="NCBIfam" id="TIGR03631">
    <property type="entry name" value="uS13_bact"/>
    <property type="match status" value="1"/>
</dbReference>
<dbReference type="PANTHER" id="PTHR10871">
    <property type="entry name" value="30S RIBOSOMAL PROTEIN S13/40S RIBOSOMAL PROTEIN S18"/>
    <property type="match status" value="1"/>
</dbReference>
<dbReference type="PANTHER" id="PTHR10871:SF1">
    <property type="entry name" value="SMALL RIBOSOMAL SUBUNIT PROTEIN US13M"/>
    <property type="match status" value="1"/>
</dbReference>
<dbReference type="Pfam" id="PF00416">
    <property type="entry name" value="Ribosomal_S13"/>
    <property type="match status" value="2"/>
</dbReference>
<dbReference type="PIRSF" id="PIRSF002134">
    <property type="entry name" value="Ribosomal_S13"/>
    <property type="match status" value="1"/>
</dbReference>
<dbReference type="SUPFAM" id="SSF46946">
    <property type="entry name" value="S13-like H2TH domain"/>
    <property type="match status" value="1"/>
</dbReference>
<dbReference type="PROSITE" id="PS00646">
    <property type="entry name" value="RIBOSOMAL_S13_1"/>
    <property type="match status" value="1"/>
</dbReference>
<dbReference type="PROSITE" id="PS50159">
    <property type="entry name" value="RIBOSOMAL_S13_2"/>
    <property type="match status" value="1"/>
</dbReference>
<evidence type="ECO:0000255" key="1">
    <source>
        <dbReference type="HAMAP-Rule" id="MF_01315"/>
    </source>
</evidence>
<evidence type="ECO:0000256" key="2">
    <source>
        <dbReference type="SAM" id="MobiDB-lite"/>
    </source>
</evidence>
<evidence type="ECO:0000305" key="3"/>
<proteinExistence type="inferred from homology"/>
<gene>
    <name evidence="1" type="primary">rpsM</name>
    <name type="ordered locus">ABBFA_000454</name>
</gene>
<protein>
    <recommendedName>
        <fullName evidence="1">Small ribosomal subunit protein uS13</fullName>
    </recommendedName>
    <alternativeName>
        <fullName evidence="3">30S ribosomal protein S13</fullName>
    </alternativeName>
</protein>
<comment type="function">
    <text evidence="1">Located at the top of the head of the 30S subunit, it contacts several helices of the 16S rRNA. In the 70S ribosome it contacts the 23S rRNA (bridge B1a) and protein L5 of the 50S subunit (bridge B1b), connecting the 2 subunits; these bridges are implicated in subunit movement. Contacts the tRNAs in the A and P-sites.</text>
</comment>
<comment type="subunit">
    <text evidence="1">Part of the 30S ribosomal subunit. Forms a loose heterodimer with protein S19. Forms two bridges to the 50S subunit in the 70S ribosome.</text>
</comment>
<comment type="similarity">
    <text evidence="1">Belongs to the universal ribosomal protein uS13 family.</text>
</comment>
<organism>
    <name type="scientific">Acinetobacter baumannii (strain AB307-0294)</name>
    <dbReference type="NCBI Taxonomy" id="557600"/>
    <lineage>
        <taxon>Bacteria</taxon>
        <taxon>Pseudomonadati</taxon>
        <taxon>Pseudomonadota</taxon>
        <taxon>Gammaproteobacteria</taxon>
        <taxon>Moraxellales</taxon>
        <taxon>Moraxellaceae</taxon>
        <taxon>Acinetobacter</taxon>
        <taxon>Acinetobacter calcoaceticus/baumannii complex</taxon>
    </lineage>
</organism>
<accession>B7GW24</accession>
<keyword id="KW-0687">Ribonucleoprotein</keyword>
<keyword id="KW-0689">Ribosomal protein</keyword>
<keyword id="KW-0694">RNA-binding</keyword>
<keyword id="KW-0699">rRNA-binding</keyword>
<keyword id="KW-0820">tRNA-binding</keyword>
<reference key="1">
    <citation type="journal article" date="2008" name="J. Bacteriol.">
        <title>Comparative genome sequence analysis of multidrug-resistant Acinetobacter baumannii.</title>
        <authorList>
            <person name="Adams M.D."/>
            <person name="Goglin K."/>
            <person name="Molyneaux N."/>
            <person name="Hujer K.M."/>
            <person name="Lavender H."/>
            <person name="Jamison J.J."/>
            <person name="MacDonald I.J."/>
            <person name="Martin K.M."/>
            <person name="Russo T."/>
            <person name="Campagnari A.A."/>
            <person name="Hujer A.M."/>
            <person name="Bonomo R.A."/>
            <person name="Gill S.R."/>
        </authorList>
    </citation>
    <scope>NUCLEOTIDE SEQUENCE [LARGE SCALE GENOMIC DNA]</scope>
    <source>
        <strain>AB307-0294</strain>
    </source>
</reference>
<name>RS13_ACIB3</name>